<reference key="1">
    <citation type="journal article" date="2003" name="Proc. Natl. Acad. Sci. U.S.A.">
        <title>The complete genome sequence of the carcinogenic bacterium Helicobacter hepaticus.</title>
        <authorList>
            <person name="Suerbaum S."/>
            <person name="Josenhans C."/>
            <person name="Sterzenbach T."/>
            <person name="Drescher B."/>
            <person name="Brandt P."/>
            <person name="Bell M."/>
            <person name="Droege M."/>
            <person name="Fartmann B."/>
            <person name="Fischer H.-P."/>
            <person name="Ge Z."/>
            <person name="Hoerster A."/>
            <person name="Holland R."/>
            <person name="Klein K."/>
            <person name="Koenig J."/>
            <person name="Macko L."/>
            <person name="Mendz G.L."/>
            <person name="Nyakatura G."/>
            <person name="Schauer D.B."/>
            <person name="Shen Z."/>
            <person name="Weber J."/>
            <person name="Frosch M."/>
            <person name="Fox J.G."/>
        </authorList>
    </citation>
    <scope>NUCLEOTIDE SEQUENCE [LARGE SCALE GENOMIC DNA]</scope>
    <source>
        <strain>ATCC 51449 / 3B1</strain>
    </source>
</reference>
<accession>Q7VH56</accession>
<protein>
    <recommendedName>
        <fullName evidence="1">Crossover junction endodeoxyribonuclease RuvC</fullName>
        <ecNumber evidence="1">3.1.21.10</ecNumber>
    </recommendedName>
    <alternativeName>
        <fullName evidence="1">Holliday junction nuclease RuvC</fullName>
    </alternativeName>
    <alternativeName>
        <fullName evidence="1">Holliday junction resolvase RuvC</fullName>
    </alternativeName>
</protein>
<organism>
    <name type="scientific">Helicobacter hepaticus (strain ATCC 51449 / 3B1)</name>
    <dbReference type="NCBI Taxonomy" id="235279"/>
    <lineage>
        <taxon>Bacteria</taxon>
        <taxon>Pseudomonadati</taxon>
        <taxon>Campylobacterota</taxon>
        <taxon>Epsilonproteobacteria</taxon>
        <taxon>Campylobacterales</taxon>
        <taxon>Helicobacteraceae</taxon>
        <taxon>Helicobacter</taxon>
    </lineage>
</organism>
<comment type="function">
    <text evidence="1">The RuvA-RuvB-RuvC complex processes Holliday junction (HJ) DNA during genetic recombination and DNA repair. Endonuclease that resolves HJ intermediates. Cleaves cruciform DNA by making single-stranded nicks across the HJ at symmetrical positions within the homologous arms, yielding a 5'-phosphate and a 3'-hydroxyl group; requires a central core of homology in the junction. The consensus cleavage sequence is 5'-(A/T)TT(C/G)-3'. Cleavage occurs on the 3'-side of the TT dinucleotide at the point of strand exchange. HJ branch migration catalyzed by RuvA-RuvB allows RuvC to scan DNA until it finds its consensus sequence, where it cleaves and resolves the cruciform DNA.</text>
</comment>
<comment type="catalytic activity">
    <reaction evidence="1">
        <text>Endonucleolytic cleavage at a junction such as a reciprocal single-stranded crossover between two homologous DNA duplexes (Holliday junction).</text>
        <dbReference type="EC" id="3.1.21.10"/>
    </reaction>
</comment>
<comment type="cofactor">
    <cofactor evidence="1">
        <name>Mg(2+)</name>
        <dbReference type="ChEBI" id="CHEBI:18420"/>
    </cofactor>
    <text evidence="1">Binds 2 Mg(2+) ion per subunit.</text>
</comment>
<comment type="subunit">
    <text evidence="1">Homodimer which binds Holliday junction (HJ) DNA. The HJ becomes 2-fold symmetrical on binding to RuvC with unstacked arms; it has a different conformation from HJ DNA in complex with RuvA. In the full resolvosome a probable DNA-RuvA(4)-RuvB(12)-RuvC(2) complex forms which resolves the HJ.</text>
</comment>
<comment type="subcellular location">
    <subcellularLocation>
        <location evidence="1">Cytoplasm</location>
    </subcellularLocation>
</comment>
<comment type="similarity">
    <text evidence="1">Belongs to the RuvC family.</text>
</comment>
<dbReference type="EC" id="3.1.21.10" evidence="1"/>
<dbReference type="EMBL" id="AE017125">
    <property type="protein sequence ID" value="AAP77708.1"/>
    <property type="molecule type" value="Genomic_DNA"/>
</dbReference>
<dbReference type="RefSeq" id="WP_011115951.1">
    <property type="nucleotide sequence ID" value="NC_004917.1"/>
</dbReference>
<dbReference type="SMR" id="Q7VH56"/>
<dbReference type="STRING" id="235279.HH_1111"/>
<dbReference type="KEGG" id="hhe:HH_1111"/>
<dbReference type="eggNOG" id="COG0817">
    <property type="taxonomic scope" value="Bacteria"/>
</dbReference>
<dbReference type="HOGENOM" id="CLU_091257_3_0_7"/>
<dbReference type="OrthoDB" id="9805499at2"/>
<dbReference type="Proteomes" id="UP000002495">
    <property type="component" value="Chromosome"/>
</dbReference>
<dbReference type="GO" id="GO:0005737">
    <property type="term" value="C:cytoplasm"/>
    <property type="evidence" value="ECO:0007669"/>
    <property type="project" value="UniProtKB-SubCell"/>
</dbReference>
<dbReference type="GO" id="GO:0048476">
    <property type="term" value="C:Holliday junction resolvase complex"/>
    <property type="evidence" value="ECO:0007669"/>
    <property type="project" value="UniProtKB-UniRule"/>
</dbReference>
<dbReference type="GO" id="GO:0008821">
    <property type="term" value="F:crossover junction DNA endonuclease activity"/>
    <property type="evidence" value="ECO:0007669"/>
    <property type="project" value="UniProtKB-UniRule"/>
</dbReference>
<dbReference type="GO" id="GO:0003677">
    <property type="term" value="F:DNA binding"/>
    <property type="evidence" value="ECO:0007669"/>
    <property type="project" value="UniProtKB-KW"/>
</dbReference>
<dbReference type="GO" id="GO:0000287">
    <property type="term" value="F:magnesium ion binding"/>
    <property type="evidence" value="ECO:0007669"/>
    <property type="project" value="UniProtKB-UniRule"/>
</dbReference>
<dbReference type="GO" id="GO:0006310">
    <property type="term" value="P:DNA recombination"/>
    <property type="evidence" value="ECO:0007669"/>
    <property type="project" value="UniProtKB-UniRule"/>
</dbReference>
<dbReference type="GO" id="GO:0006281">
    <property type="term" value="P:DNA repair"/>
    <property type="evidence" value="ECO:0007669"/>
    <property type="project" value="UniProtKB-UniRule"/>
</dbReference>
<dbReference type="CDD" id="cd16962">
    <property type="entry name" value="RuvC"/>
    <property type="match status" value="1"/>
</dbReference>
<dbReference type="FunFam" id="3.30.420.10:FF:000002">
    <property type="entry name" value="Crossover junction endodeoxyribonuclease RuvC"/>
    <property type="match status" value="1"/>
</dbReference>
<dbReference type="Gene3D" id="3.30.420.10">
    <property type="entry name" value="Ribonuclease H-like superfamily/Ribonuclease H"/>
    <property type="match status" value="1"/>
</dbReference>
<dbReference type="HAMAP" id="MF_00034">
    <property type="entry name" value="RuvC"/>
    <property type="match status" value="1"/>
</dbReference>
<dbReference type="InterPro" id="IPR012337">
    <property type="entry name" value="RNaseH-like_sf"/>
</dbReference>
<dbReference type="InterPro" id="IPR036397">
    <property type="entry name" value="RNaseH_sf"/>
</dbReference>
<dbReference type="InterPro" id="IPR020563">
    <property type="entry name" value="X-over_junc_endoDNase_Mg_BS"/>
</dbReference>
<dbReference type="InterPro" id="IPR002176">
    <property type="entry name" value="X-over_junc_endoDNase_RuvC"/>
</dbReference>
<dbReference type="NCBIfam" id="TIGR00228">
    <property type="entry name" value="ruvC"/>
    <property type="match status" value="1"/>
</dbReference>
<dbReference type="PANTHER" id="PTHR30194">
    <property type="entry name" value="CROSSOVER JUNCTION ENDODEOXYRIBONUCLEASE RUVC"/>
    <property type="match status" value="1"/>
</dbReference>
<dbReference type="PANTHER" id="PTHR30194:SF3">
    <property type="entry name" value="CROSSOVER JUNCTION ENDODEOXYRIBONUCLEASE RUVC"/>
    <property type="match status" value="1"/>
</dbReference>
<dbReference type="Pfam" id="PF02075">
    <property type="entry name" value="RuvC"/>
    <property type="match status" value="1"/>
</dbReference>
<dbReference type="PRINTS" id="PR00696">
    <property type="entry name" value="RSOLVASERUVC"/>
</dbReference>
<dbReference type="SUPFAM" id="SSF53098">
    <property type="entry name" value="Ribonuclease H-like"/>
    <property type="match status" value="1"/>
</dbReference>
<dbReference type="PROSITE" id="PS01321">
    <property type="entry name" value="RUVC"/>
    <property type="match status" value="1"/>
</dbReference>
<evidence type="ECO:0000255" key="1">
    <source>
        <dbReference type="HAMAP-Rule" id="MF_00034"/>
    </source>
</evidence>
<name>RUVC_HELHP</name>
<gene>
    <name evidence="1" type="primary">ruvC</name>
    <name type="ordered locus">HH_1111</name>
</gene>
<sequence>MHILGIDPGSRNCGYAIINYAPHVNSLKLIEAGIIKIKERDLQTQIMEFVEGIDLVIKNIHIDEVAIEDIFFAYNPQSVIKLAQFRGALSLKILQEIGNFSEYTPLQVKKAITGNGKADKTQVAFMVKRILGLKGEIKPLDITDAIAIAITHSQRIKTNDVHSTPNLQRAMPLKSLSANPSKGCI</sequence>
<keyword id="KW-0963">Cytoplasm</keyword>
<keyword id="KW-0227">DNA damage</keyword>
<keyword id="KW-0233">DNA recombination</keyword>
<keyword id="KW-0234">DNA repair</keyword>
<keyword id="KW-0238">DNA-binding</keyword>
<keyword id="KW-0255">Endonuclease</keyword>
<keyword id="KW-0378">Hydrolase</keyword>
<keyword id="KW-0460">Magnesium</keyword>
<keyword id="KW-0479">Metal-binding</keyword>
<keyword id="KW-0540">Nuclease</keyword>
<keyword id="KW-1185">Reference proteome</keyword>
<proteinExistence type="inferred from homology"/>
<feature type="chain" id="PRO_0000183104" description="Crossover junction endodeoxyribonuclease RuvC">
    <location>
        <begin position="1"/>
        <end position="185"/>
    </location>
</feature>
<feature type="active site" evidence="1">
    <location>
        <position position="7"/>
    </location>
</feature>
<feature type="active site" evidence="1">
    <location>
        <position position="68"/>
    </location>
</feature>
<feature type="active site" evidence="1">
    <location>
        <position position="141"/>
    </location>
</feature>
<feature type="binding site" evidence="1">
    <location>
        <position position="7"/>
    </location>
    <ligand>
        <name>Mg(2+)</name>
        <dbReference type="ChEBI" id="CHEBI:18420"/>
        <label>1</label>
    </ligand>
</feature>
<feature type="binding site" evidence="1">
    <location>
        <position position="68"/>
    </location>
    <ligand>
        <name>Mg(2+)</name>
        <dbReference type="ChEBI" id="CHEBI:18420"/>
        <label>2</label>
    </ligand>
</feature>
<feature type="binding site" evidence="1">
    <location>
        <position position="141"/>
    </location>
    <ligand>
        <name>Mg(2+)</name>
        <dbReference type="ChEBI" id="CHEBI:18420"/>
        <label>1</label>
    </ligand>
</feature>